<protein>
    <recommendedName>
        <fullName>Uncharacterized protein TP_0846</fullName>
    </recommendedName>
</protein>
<organism>
    <name type="scientific">Treponema pallidum (strain Nichols)</name>
    <dbReference type="NCBI Taxonomy" id="243276"/>
    <lineage>
        <taxon>Bacteria</taxon>
        <taxon>Pseudomonadati</taxon>
        <taxon>Spirochaetota</taxon>
        <taxon>Spirochaetia</taxon>
        <taxon>Spirochaetales</taxon>
        <taxon>Treponemataceae</taxon>
        <taxon>Treponema</taxon>
    </lineage>
</organism>
<proteinExistence type="predicted"/>
<name>Y846_TREPA</name>
<dbReference type="EMBL" id="AE000520">
    <property type="protein sequence ID" value="AAC65819.1"/>
    <property type="molecule type" value="Genomic_DNA"/>
</dbReference>
<dbReference type="PIR" id="F71273">
    <property type="entry name" value="F71273"/>
</dbReference>
<dbReference type="RefSeq" id="WP_010882290.1">
    <property type="nucleotide sequence ID" value="NC_021490.2"/>
</dbReference>
<dbReference type="SMR" id="O83818"/>
<dbReference type="IntAct" id="O83818">
    <property type="interactions" value="1"/>
</dbReference>
<dbReference type="STRING" id="243276.TP_0846"/>
<dbReference type="EnsemblBacteria" id="AAC65819">
    <property type="protein sequence ID" value="AAC65819"/>
    <property type="gene ID" value="TP_0846"/>
</dbReference>
<dbReference type="KEGG" id="tpa:TP_0846"/>
<dbReference type="KEGG" id="tpw:TPANIC_0846"/>
<dbReference type="eggNOG" id="COG3027">
    <property type="taxonomic scope" value="Bacteria"/>
</dbReference>
<dbReference type="HOGENOM" id="CLU_116623_5_0_12"/>
<dbReference type="OrthoDB" id="360980at2"/>
<dbReference type="Proteomes" id="UP000000811">
    <property type="component" value="Chromosome"/>
</dbReference>
<dbReference type="InterPro" id="IPR007838">
    <property type="entry name" value="Cell_div_ZapA-like"/>
</dbReference>
<dbReference type="InterPro" id="IPR036192">
    <property type="entry name" value="Cell_div_ZapA-like_sf"/>
</dbReference>
<dbReference type="Pfam" id="PF05164">
    <property type="entry name" value="ZapA"/>
    <property type="match status" value="1"/>
</dbReference>
<dbReference type="SUPFAM" id="SSF102829">
    <property type="entry name" value="Cell division protein ZapA-like"/>
    <property type="match status" value="1"/>
</dbReference>
<keyword id="KW-1185">Reference proteome</keyword>
<sequence>MVSVKGQLHIDLLGASFSIQADEDSSYLRVLYEHYKMVVLQVEKTSGVRDPLKVAVIAGVLLADELHKEKRRRLVQSEEDLLEIGESTERMLESISKVVDEGFVCGRD</sequence>
<gene>
    <name type="ordered locus">TP_0846</name>
</gene>
<reference key="1">
    <citation type="journal article" date="1998" name="Science">
        <title>Complete genome sequence of Treponema pallidum, the syphilis spirochete.</title>
        <authorList>
            <person name="Fraser C.M."/>
            <person name="Norris S.J."/>
            <person name="Weinstock G.M."/>
            <person name="White O."/>
            <person name="Sutton G.G."/>
            <person name="Dodson R.J."/>
            <person name="Gwinn M.L."/>
            <person name="Hickey E.K."/>
            <person name="Clayton R.A."/>
            <person name="Ketchum K.A."/>
            <person name="Sodergren E."/>
            <person name="Hardham J.M."/>
            <person name="McLeod M.P."/>
            <person name="Salzberg S.L."/>
            <person name="Peterson J.D."/>
            <person name="Khalak H.G."/>
            <person name="Richardson D.L."/>
            <person name="Howell J.K."/>
            <person name="Chidambaram M."/>
            <person name="Utterback T.R."/>
            <person name="McDonald L.A."/>
            <person name="Artiach P."/>
            <person name="Bowman C."/>
            <person name="Cotton M.D."/>
            <person name="Fujii C."/>
            <person name="Garland S.A."/>
            <person name="Hatch B."/>
            <person name="Horst K."/>
            <person name="Roberts K.M."/>
            <person name="Sandusky M."/>
            <person name="Weidman J.F."/>
            <person name="Smith H.O."/>
            <person name="Venter J.C."/>
        </authorList>
    </citation>
    <scope>NUCLEOTIDE SEQUENCE [LARGE SCALE GENOMIC DNA]</scope>
    <source>
        <strain>Nichols</strain>
    </source>
</reference>
<feature type="chain" id="PRO_0000202337" description="Uncharacterized protein TP_0846">
    <location>
        <begin position="1"/>
        <end position="108"/>
    </location>
</feature>
<accession>O83818</accession>